<keyword id="KW-1015">Disulfide bond</keyword>
<keyword id="KW-0960">Knottin</keyword>
<keyword id="KW-0528">Neurotoxin</keyword>
<keyword id="KW-0964">Secreted</keyword>
<keyword id="KW-0732">Signal</keyword>
<keyword id="KW-0800">Toxin</keyword>
<accession>P0DTY7</accession>
<organism>
    <name type="scientific">Californiconus californicus</name>
    <name type="common">California cone</name>
    <name type="synonym">Conus californicus</name>
    <dbReference type="NCBI Taxonomy" id="1736779"/>
    <lineage>
        <taxon>Eukaryota</taxon>
        <taxon>Metazoa</taxon>
        <taxon>Spiralia</taxon>
        <taxon>Lophotrochozoa</taxon>
        <taxon>Mollusca</taxon>
        <taxon>Gastropoda</taxon>
        <taxon>Caenogastropoda</taxon>
        <taxon>Neogastropoda</taxon>
        <taxon>Conoidea</taxon>
        <taxon>Conidae</taxon>
        <taxon>Californiconus</taxon>
    </lineage>
</organism>
<comment type="function">
    <text evidence="3">Probable neurotoxin.</text>
</comment>
<comment type="subcellular location">
    <subcellularLocation>
        <location evidence="4">Secreted</location>
    </subcellularLocation>
</comment>
<comment type="tissue specificity">
    <text evidence="4">Expressed by the venom duct.</text>
</comment>
<comment type="domain">
    <text evidence="3">The cysteine framework is VI/VII (C-C-CC-C-C).</text>
</comment>
<comment type="domain">
    <text evidence="3">The presence of a 'disulfide through disulfide knot' structurally defines this protein as a knottin.</text>
</comment>
<reference key="1">
    <citation type="journal article" date="2019" name="Toxins">
        <title>The diversified O-superfamily in Californiconus californicus presents a conotoxin with antimycobacterial activity.</title>
        <authorList>
            <person name="Bernaldez-Sarabia J."/>
            <person name="Figueroa-Montiel A."/>
            <person name="Duenas S."/>
            <person name="Cervantes-Luevano K."/>
            <person name="Beltran J.A."/>
            <person name="Ortiz E."/>
            <person name="Jimenez S."/>
            <person name="Possani L.D."/>
            <person name="Paniagua-Solis J.F."/>
            <person name="Gonzalez-Canudas J."/>
            <person name="Licea-Navarro A."/>
        </authorList>
    </citation>
    <scope>NUCLEOTIDE SEQUENCE [MRNA]</scope>
    <source>
        <tissue>Venom duct</tissue>
    </source>
</reference>
<protein>
    <recommendedName>
        <fullName evidence="3">Conotoxin Cal6.25</fullName>
    </recommendedName>
    <alternativeName>
        <fullName evidence="2">O1_cal6.25</fullName>
    </alternativeName>
</protein>
<evidence type="ECO:0000255" key="1"/>
<evidence type="ECO:0000303" key="2">
    <source>
    </source>
</evidence>
<evidence type="ECO:0000305" key="3"/>
<evidence type="ECO:0000305" key="4">
    <source>
    </source>
</evidence>
<name>C625_CONCL</name>
<feature type="signal peptide" evidence="1">
    <location>
        <begin position="1"/>
        <end position="22"/>
    </location>
</feature>
<feature type="peptide" id="PRO_0000450969" description="Conotoxin Cal6.25">
    <location>
        <begin position="23"/>
        <end position="52"/>
    </location>
</feature>
<feature type="disulfide bond" evidence="3">
    <location>
        <begin position="24"/>
        <end position="41"/>
    </location>
</feature>
<feature type="disulfide bond" evidence="3">
    <location>
        <begin position="31"/>
        <end position="45"/>
    </location>
</feature>
<feature type="disulfide bond" evidence="3">
    <location>
        <begin position="40"/>
        <end position="50"/>
    </location>
</feature>
<proteinExistence type="inferred from homology"/>
<sequence>MKLTHVLIVAVLVLTVCHLTMAVCKSGGQACWFLLKKHNCCSGYCIVAVCAG</sequence>
<dbReference type="SMR" id="P0DTY7"/>
<dbReference type="GO" id="GO:0005576">
    <property type="term" value="C:extracellular region"/>
    <property type="evidence" value="ECO:0007669"/>
    <property type="project" value="UniProtKB-SubCell"/>
</dbReference>
<dbReference type="GO" id="GO:0090729">
    <property type="term" value="F:toxin activity"/>
    <property type="evidence" value="ECO:0007669"/>
    <property type="project" value="UniProtKB-KW"/>
</dbReference>